<feature type="chain" id="PRO_0000282371" description="Cytochrome c oxidase assembly factor 7 homolog">
    <location>
        <begin position="1"/>
        <end position="266"/>
    </location>
</feature>
<feature type="repeat" description="Sel1-like 1">
    <location>
        <begin position="32"/>
        <end position="64"/>
    </location>
</feature>
<feature type="repeat" description="Sel1-like 2">
    <location>
        <begin position="66"/>
        <end position="104"/>
    </location>
</feature>
<feature type="repeat" description="Sel1-like 3">
    <location>
        <begin position="212"/>
        <end position="247"/>
    </location>
</feature>
<feature type="region of interest" description="Disordered" evidence="1">
    <location>
        <begin position="166"/>
        <end position="187"/>
    </location>
</feature>
<feature type="compositionally biased region" description="Low complexity" evidence="1">
    <location>
        <begin position="166"/>
        <end position="179"/>
    </location>
</feature>
<feature type="splice variant" id="VSP_024123" description="In isoform 2." evidence="3">
    <original>GLEFLTKSCDLNNATA</original>
    <variation>VKVSYGDHGPKPSIKG</variation>
    <location>
        <begin position="131"/>
        <end position="146"/>
    </location>
</feature>
<feature type="splice variant" id="VSP_024124" description="In isoform 2." evidence="3">
    <location>
        <begin position="147"/>
        <end position="266"/>
    </location>
</feature>
<evidence type="ECO:0000256" key="1">
    <source>
        <dbReference type="SAM" id="MobiDB-lite"/>
    </source>
</evidence>
<evidence type="ECO:0000269" key="2">
    <source>
    </source>
</evidence>
<evidence type="ECO:0000305" key="3"/>
<evidence type="ECO:0000312" key="4">
    <source>
        <dbReference type="FlyBase" id="FBgn0039965"/>
    </source>
</evidence>
<reference key="1">
    <citation type="journal article" date="2000" name="Science">
        <title>The genome sequence of Drosophila melanogaster.</title>
        <authorList>
            <person name="Adams M.D."/>
            <person name="Celniker S.E."/>
            <person name="Holt R.A."/>
            <person name="Evans C.A."/>
            <person name="Gocayne J.D."/>
            <person name="Amanatides P.G."/>
            <person name="Scherer S.E."/>
            <person name="Li P.W."/>
            <person name="Hoskins R.A."/>
            <person name="Galle R.F."/>
            <person name="George R.A."/>
            <person name="Lewis S.E."/>
            <person name="Richards S."/>
            <person name="Ashburner M."/>
            <person name="Henderson S.N."/>
            <person name="Sutton G.G."/>
            <person name="Wortman J.R."/>
            <person name="Yandell M.D."/>
            <person name="Zhang Q."/>
            <person name="Chen L.X."/>
            <person name="Brandon R.C."/>
            <person name="Rogers Y.-H.C."/>
            <person name="Blazej R.G."/>
            <person name="Champe M."/>
            <person name="Pfeiffer B.D."/>
            <person name="Wan K.H."/>
            <person name="Doyle C."/>
            <person name="Baxter E.G."/>
            <person name="Helt G."/>
            <person name="Nelson C.R."/>
            <person name="Miklos G.L.G."/>
            <person name="Abril J.F."/>
            <person name="Agbayani A."/>
            <person name="An H.-J."/>
            <person name="Andrews-Pfannkoch C."/>
            <person name="Baldwin D."/>
            <person name="Ballew R.M."/>
            <person name="Basu A."/>
            <person name="Baxendale J."/>
            <person name="Bayraktaroglu L."/>
            <person name="Beasley E.M."/>
            <person name="Beeson K.Y."/>
            <person name="Benos P.V."/>
            <person name="Berman B.P."/>
            <person name="Bhandari D."/>
            <person name="Bolshakov S."/>
            <person name="Borkova D."/>
            <person name="Botchan M.R."/>
            <person name="Bouck J."/>
            <person name="Brokstein P."/>
            <person name="Brottier P."/>
            <person name="Burtis K.C."/>
            <person name="Busam D.A."/>
            <person name="Butler H."/>
            <person name="Cadieu E."/>
            <person name="Center A."/>
            <person name="Chandra I."/>
            <person name="Cherry J.M."/>
            <person name="Cawley S."/>
            <person name="Dahlke C."/>
            <person name="Davenport L.B."/>
            <person name="Davies P."/>
            <person name="de Pablos B."/>
            <person name="Delcher A."/>
            <person name="Deng Z."/>
            <person name="Mays A.D."/>
            <person name="Dew I."/>
            <person name="Dietz S.M."/>
            <person name="Dodson K."/>
            <person name="Doup L.E."/>
            <person name="Downes M."/>
            <person name="Dugan-Rocha S."/>
            <person name="Dunkov B.C."/>
            <person name="Dunn P."/>
            <person name="Durbin K.J."/>
            <person name="Evangelista C.C."/>
            <person name="Ferraz C."/>
            <person name="Ferriera S."/>
            <person name="Fleischmann W."/>
            <person name="Fosler C."/>
            <person name="Gabrielian A.E."/>
            <person name="Garg N.S."/>
            <person name="Gelbart W.M."/>
            <person name="Glasser K."/>
            <person name="Glodek A."/>
            <person name="Gong F."/>
            <person name="Gorrell J.H."/>
            <person name="Gu Z."/>
            <person name="Guan P."/>
            <person name="Harris M."/>
            <person name="Harris N.L."/>
            <person name="Harvey D.A."/>
            <person name="Heiman T.J."/>
            <person name="Hernandez J.R."/>
            <person name="Houck J."/>
            <person name="Hostin D."/>
            <person name="Houston K.A."/>
            <person name="Howland T.J."/>
            <person name="Wei M.-H."/>
            <person name="Ibegwam C."/>
            <person name="Jalali M."/>
            <person name="Kalush F."/>
            <person name="Karpen G.H."/>
            <person name="Ke Z."/>
            <person name="Kennison J.A."/>
            <person name="Ketchum K.A."/>
            <person name="Kimmel B.E."/>
            <person name="Kodira C.D."/>
            <person name="Kraft C.L."/>
            <person name="Kravitz S."/>
            <person name="Kulp D."/>
            <person name="Lai Z."/>
            <person name="Lasko P."/>
            <person name="Lei Y."/>
            <person name="Levitsky A.A."/>
            <person name="Li J.H."/>
            <person name="Li Z."/>
            <person name="Liang Y."/>
            <person name="Lin X."/>
            <person name="Liu X."/>
            <person name="Mattei B."/>
            <person name="McIntosh T.C."/>
            <person name="McLeod M.P."/>
            <person name="McPherson D."/>
            <person name="Merkulov G."/>
            <person name="Milshina N.V."/>
            <person name="Mobarry C."/>
            <person name="Morris J."/>
            <person name="Moshrefi A."/>
            <person name="Mount S.M."/>
            <person name="Moy M."/>
            <person name="Murphy B."/>
            <person name="Murphy L."/>
            <person name="Muzny D.M."/>
            <person name="Nelson D.L."/>
            <person name="Nelson D.R."/>
            <person name="Nelson K.A."/>
            <person name="Nixon K."/>
            <person name="Nusskern D.R."/>
            <person name="Pacleb J.M."/>
            <person name="Palazzolo M."/>
            <person name="Pittman G.S."/>
            <person name="Pan S."/>
            <person name="Pollard J."/>
            <person name="Puri V."/>
            <person name="Reese M.G."/>
            <person name="Reinert K."/>
            <person name="Remington K."/>
            <person name="Saunders R.D.C."/>
            <person name="Scheeler F."/>
            <person name="Shen H."/>
            <person name="Shue B.C."/>
            <person name="Siden-Kiamos I."/>
            <person name="Simpson M."/>
            <person name="Skupski M.P."/>
            <person name="Smith T.J."/>
            <person name="Spier E."/>
            <person name="Spradling A.C."/>
            <person name="Stapleton M."/>
            <person name="Strong R."/>
            <person name="Sun E."/>
            <person name="Svirskas R."/>
            <person name="Tector C."/>
            <person name="Turner R."/>
            <person name="Venter E."/>
            <person name="Wang A.H."/>
            <person name="Wang X."/>
            <person name="Wang Z.-Y."/>
            <person name="Wassarman D.A."/>
            <person name="Weinstock G.M."/>
            <person name="Weissenbach J."/>
            <person name="Williams S.M."/>
            <person name="Woodage T."/>
            <person name="Worley K.C."/>
            <person name="Wu D."/>
            <person name="Yang S."/>
            <person name="Yao Q.A."/>
            <person name="Ye J."/>
            <person name="Yeh R.-F."/>
            <person name="Zaveri J.S."/>
            <person name="Zhan M."/>
            <person name="Zhang G."/>
            <person name="Zhao Q."/>
            <person name="Zheng L."/>
            <person name="Zheng X.H."/>
            <person name="Zhong F.N."/>
            <person name="Zhong W."/>
            <person name="Zhou X."/>
            <person name="Zhu S.C."/>
            <person name="Zhu X."/>
            <person name="Smith H.O."/>
            <person name="Gibbs R.A."/>
            <person name="Myers E.W."/>
            <person name="Rubin G.M."/>
            <person name="Venter J.C."/>
        </authorList>
    </citation>
    <scope>NUCLEOTIDE SEQUENCE [LARGE SCALE GENOMIC DNA]</scope>
    <source>
        <strain>Berkeley</strain>
    </source>
</reference>
<reference key="2">
    <citation type="journal article" date="2002" name="Genome Biol.">
        <title>Annotation of the Drosophila melanogaster euchromatic genome: a systematic review.</title>
        <authorList>
            <person name="Misra S."/>
            <person name="Crosby M.A."/>
            <person name="Mungall C.J."/>
            <person name="Matthews B.B."/>
            <person name="Campbell K.S."/>
            <person name="Hradecky P."/>
            <person name="Huang Y."/>
            <person name="Kaminker J.S."/>
            <person name="Millburn G.H."/>
            <person name="Prochnik S.E."/>
            <person name="Smith C.D."/>
            <person name="Tupy J.L."/>
            <person name="Whitfield E.J."/>
            <person name="Bayraktaroglu L."/>
            <person name="Berman B.P."/>
            <person name="Bettencourt B.R."/>
            <person name="Celniker S.E."/>
            <person name="de Grey A.D.N.J."/>
            <person name="Drysdale R.A."/>
            <person name="Harris N.L."/>
            <person name="Richter J."/>
            <person name="Russo S."/>
            <person name="Schroeder A.J."/>
            <person name="Shu S.Q."/>
            <person name="Stapleton M."/>
            <person name="Yamada C."/>
            <person name="Ashburner M."/>
            <person name="Gelbart W.M."/>
            <person name="Rubin G.M."/>
            <person name="Lewis S.E."/>
        </authorList>
    </citation>
    <scope>GENOME REANNOTATION</scope>
    <scope>ALTERNATIVE SPLICING</scope>
    <source>
        <strain>Berkeley</strain>
    </source>
</reference>
<reference key="3">
    <citation type="journal article" date="2002" name="Genome Biol.">
        <title>A Drosophila full-length cDNA resource.</title>
        <authorList>
            <person name="Stapleton M."/>
            <person name="Carlson J.W."/>
            <person name="Brokstein P."/>
            <person name="Yu C."/>
            <person name="Champe M."/>
            <person name="George R.A."/>
            <person name="Guarin H."/>
            <person name="Kronmiller B."/>
            <person name="Pacleb J.M."/>
            <person name="Park S."/>
            <person name="Wan K.H."/>
            <person name="Rubin G.M."/>
            <person name="Celniker S.E."/>
        </authorList>
    </citation>
    <scope>NUCLEOTIDE SEQUENCE [LARGE SCALE MRNA] (ISOFORM 1)</scope>
    <source>
        <strain>Berkeley</strain>
        <tissue>Embryo</tissue>
    </source>
</reference>
<reference key="4">
    <citation type="journal article" date="2018" name="Brain">
        <title>Mutations in COA7 cause spinocerebellar ataxia with axonal neuropathy.</title>
        <authorList>
            <person name="Higuchi Y."/>
            <person name="Okunushi R."/>
            <person name="Hara T."/>
            <person name="Hashiguchi A."/>
            <person name="Yuan J."/>
            <person name="Yoshimura A."/>
            <person name="Murayama K."/>
            <person name="Ohtake A."/>
            <person name="Ando M."/>
            <person name="Hiramatsu Y."/>
            <person name="Ishihara S."/>
            <person name="Tanabe H."/>
            <person name="Okamoto Y."/>
            <person name="Matsuura E."/>
            <person name="Ueda T."/>
            <person name="Toda T."/>
            <person name="Yamashita S."/>
            <person name="Yamada K."/>
            <person name="Koide T."/>
            <person name="Yaguchi H."/>
            <person name="Mitsui J."/>
            <person name="Ishiura H."/>
            <person name="Yoshimura J."/>
            <person name="Doi K."/>
            <person name="Morishita S."/>
            <person name="Sato K."/>
            <person name="Nakagawa M."/>
            <person name="Yamaguchi M."/>
            <person name="Tsuji S."/>
            <person name="Takashima H."/>
        </authorList>
    </citation>
    <scope>FUNCTION</scope>
    <scope>DISRUPTION PHENOTYPE</scope>
</reference>
<proteinExistence type="evidence at transcript level"/>
<gene>
    <name evidence="4" type="primary">Coa7</name>
    <name evidence="4" type="ORF">CG13865</name>
</gene>
<comment type="function">
    <text evidence="2">Required for locomotion. Probably involved in the regulation of formation/maintenance of motor neurons at presynaptic terminals at the neuromuscular junction.</text>
</comment>
<comment type="alternative products">
    <event type="alternative splicing"/>
    <isoform>
        <id>Q9W5N0-1</id>
        <name>1</name>
        <sequence type="displayed"/>
    </isoform>
    <isoform>
        <id>Q9W5N0-2</id>
        <name>2</name>
        <sequence type="described" ref="VSP_024123 VSP_024124"/>
    </isoform>
</comment>
<comment type="disruption phenotype">
    <text evidence="2">Knockdown in the nervous system results in reduced lifespan, mobility deficit and shortened synaptic branches of motor neurons.</text>
</comment>
<comment type="similarity">
    <text evidence="3">Belongs to the hcp beta-lactamase family.</text>
</comment>
<dbReference type="EMBL" id="AE014298">
    <property type="protein sequence ID" value="EAA46053.1"/>
    <property type="molecule type" value="Genomic_DNA"/>
</dbReference>
<dbReference type="EMBL" id="AE014298">
    <property type="protein sequence ID" value="ABI31013.1"/>
    <property type="molecule type" value="Genomic_DNA"/>
</dbReference>
<dbReference type="EMBL" id="AY122232">
    <property type="protein sequence ID" value="AAM52744.1"/>
    <property type="molecule type" value="mRNA"/>
</dbReference>
<dbReference type="RefSeq" id="NP_001036323.1">
    <molecule id="Q9W5N0-1"/>
    <property type="nucleotide sequence ID" value="NM_001042858.2"/>
</dbReference>
<dbReference type="RefSeq" id="NP_001036324.1">
    <molecule id="Q9W5N0-2"/>
    <property type="nucleotide sequence ID" value="NM_001042859.2"/>
</dbReference>
<dbReference type="RefSeq" id="NP_001285541.1">
    <molecule id="Q9W5N0-1"/>
    <property type="nucleotide sequence ID" value="NM_001298612.1"/>
</dbReference>
<dbReference type="SMR" id="Q9W5N0"/>
<dbReference type="BioGRID" id="78283">
    <property type="interactions" value="5"/>
</dbReference>
<dbReference type="DIP" id="DIP-20975N"/>
<dbReference type="FunCoup" id="Q9W5N0">
    <property type="interactions" value="447"/>
</dbReference>
<dbReference type="IntAct" id="Q9W5N0">
    <property type="interactions" value="5"/>
</dbReference>
<dbReference type="STRING" id="7227.FBpp0310529"/>
<dbReference type="PaxDb" id="7227-FBpp0110448"/>
<dbReference type="DNASU" id="3355158"/>
<dbReference type="EnsemblMetazoa" id="FBtr0111191">
    <molecule id="Q9W5N0-2"/>
    <property type="protein sequence ID" value="FBpp0110465"/>
    <property type="gene ID" value="FBgn0039965"/>
</dbReference>
<dbReference type="EnsemblMetazoa" id="FBtr0111192">
    <molecule id="Q9W5N0-1"/>
    <property type="protein sequence ID" value="FBpp0110448"/>
    <property type="gene ID" value="FBgn0039965"/>
</dbReference>
<dbReference type="EnsemblMetazoa" id="FBtr0344110">
    <molecule id="Q9W5N0-1"/>
    <property type="protein sequence ID" value="FBpp0310529"/>
    <property type="gene ID" value="FBgn0039965"/>
</dbReference>
<dbReference type="GeneID" id="3355158"/>
<dbReference type="KEGG" id="dme:Dmel_CG13865"/>
<dbReference type="UCSC" id="CG13865-RA">
    <molecule id="Q9W5N0-1"/>
    <property type="organism name" value="d. melanogaster"/>
</dbReference>
<dbReference type="AGR" id="FB:FBgn0039965"/>
<dbReference type="CTD" id="65260"/>
<dbReference type="FlyBase" id="FBgn0039965">
    <property type="gene designation" value="Coa7"/>
</dbReference>
<dbReference type="VEuPathDB" id="VectorBase:FBgn0039965"/>
<dbReference type="eggNOG" id="KOG4014">
    <property type="taxonomic scope" value="Eukaryota"/>
</dbReference>
<dbReference type="GeneTree" id="ENSGT00390000004835"/>
<dbReference type="HOGENOM" id="CLU_000288_36_9_1"/>
<dbReference type="InParanoid" id="Q9W5N0"/>
<dbReference type="OMA" id="PGCINAG"/>
<dbReference type="OrthoDB" id="272077at2759"/>
<dbReference type="PhylomeDB" id="Q9W5N0"/>
<dbReference type="BioGRID-ORCS" id="3355158">
    <property type="hits" value="1 hit in 1 CRISPR screen"/>
</dbReference>
<dbReference type="GenomeRNAi" id="3355158"/>
<dbReference type="PRO" id="PR:Q9W5N0"/>
<dbReference type="Proteomes" id="UP000000803">
    <property type="component" value="Chromosome X"/>
</dbReference>
<dbReference type="Bgee" id="FBgn0039965">
    <property type="expression patterns" value="Expressed in ovary and 164 other cell types or tissues"/>
</dbReference>
<dbReference type="ExpressionAtlas" id="Q9W5N0">
    <property type="expression patterns" value="baseline and differential"/>
</dbReference>
<dbReference type="GO" id="GO:0005758">
    <property type="term" value="C:mitochondrial intermembrane space"/>
    <property type="evidence" value="ECO:0000250"/>
    <property type="project" value="FlyBase"/>
</dbReference>
<dbReference type="GO" id="GO:0015035">
    <property type="term" value="F:protein-disulfide reductase activity"/>
    <property type="evidence" value="ECO:0000250"/>
    <property type="project" value="FlyBase"/>
</dbReference>
<dbReference type="GO" id="GO:0008535">
    <property type="term" value="P:respiratory chain complex IV assembly"/>
    <property type="evidence" value="ECO:0000250"/>
    <property type="project" value="FlyBase"/>
</dbReference>
<dbReference type="Gene3D" id="1.25.40.10">
    <property type="entry name" value="Tetratricopeptide repeat domain"/>
    <property type="match status" value="1"/>
</dbReference>
<dbReference type="InterPro" id="IPR040239">
    <property type="entry name" value="HcpB-like"/>
</dbReference>
<dbReference type="InterPro" id="IPR006597">
    <property type="entry name" value="Sel1-like"/>
</dbReference>
<dbReference type="InterPro" id="IPR011990">
    <property type="entry name" value="TPR-like_helical_dom_sf"/>
</dbReference>
<dbReference type="PANTHER" id="PTHR13891">
    <property type="entry name" value="CYTOCHROME C OXIDASE ASSEMBLY FACTOR 7"/>
    <property type="match status" value="1"/>
</dbReference>
<dbReference type="PANTHER" id="PTHR13891:SF1">
    <property type="entry name" value="CYTOCHROME C OXIDASE ASSEMBLY FACTOR 7"/>
    <property type="match status" value="1"/>
</dbReference>
<dbReference type="Pfam" id="PF08238">
    <property type="entry name" value="Sel1"/>
    <property type="match status" value="5"/>
</dbReference>
<dbReference type="SMART" id="SM00671">
    <property type="entry name" value="SEL1"/>
    <property type="match status" value="3"/>
</dbReference>
<dbReference type="SUPFAM" id="SSF81901">
    <property type="entry name" value="HCP-like"/>
    <property type="match status" value="2"/>
</dbReference>
<name>COA7_DROME</name>
<accession>Q9W5N0</accession>
<accession>Q0KHN1</accession>
<protein>
    <recommendedName>
        <fullName evidence="4">Cytochrome c oxidase assembly factor 7 homolog</fullName>
    </recommendedName>
    <alternativeName>
        <fullName>Beta-lactamase hcp-like protein CG13865</fullName>
    </alternativeName>
    <alternativeName>
        <fullName>Sel1 repeat-containing protein 1 homolog</fullName>
    </alternativeName>
</protein>
<sequence>MAYDLKKESDVKEYVEKLGVEYRFGCYSEKKPEACHLLGDYLEGIKKDFEKASKVYKSTCDDYGYAKSCYKYGNYSFLGKGKSGSKGNPQVAYEYYEKGCNLNDSDACLHSGLLLVSKSMPREIDWNVPKGLEFLTKSCDLNNATACFYLSGMHISGVQKKADQSAVTASSGSGTSSPPAGQPPLKDSDYIVLKDMKKAFQFAHKACELRNMYACANLSQMYARGDGIEKNEKEAEKYKKLALEMQDEVKKQHDTLGFQQGVGMPN</sequence>
<organism>
    <name type="scientific">Drosophila melanogaster</name>
    <name type="common">Fruit fly</name>
    <dbReference type="NCBI Taxonomy" id="7227"/>
    <lineage>
        <taxon>Eukaryota</taxon>
        <taxon>Metazoa</taxon>
        <taxon>Ecdysozoa</taxon>
        <taxon>Arthropoda</taxon>
        <taxon>Hexapoda</taxon>
        <taxon>Insecta</taxon>
        <taxon>Pterygota</taxon>
        <taxon>Neoptera</taxon>
        <taxon>Endopterygota</taxon>
        <taxon>Diptera</taxon>
        <taxon>Brachycera</taxon>
        <taxon>Muscomorpha</taxon>
        <taxon>Ephydroidea</taxon>
        <taxon>Drosophilidae</taxon>
        <taxon>Drosophila</taxon>
        <taxon>Sophophora</taxon>
    </lineage>
</organism>
<keyword id="KW-0025">Alternative splicing</keyword>
<keyword id="KW-1185">Reference proteome</keyword>
<keyword id="KW-0677">Repeat</keyword>